<protein>
    <recommendedName>
        <fullName>Proteasome subunit alpha type-7-A</fullName>
    </recommendedName>
    <alternativeName>
        <fullName>20S proteasome alpha subunit D-1</fullName>
    </alternativeName>
    <alternativeName>
        <fullName>20S proteasome subunit alpha-4-A</fullName>
    </alternativeName>
</protein>
<sequence length="249" mass="27296">MARYDRAITVFSPDGHLFQVEYALEAVRKGNAAVGVRGTDTVVLGVEKKSTPKLQDSRSMRKIASLDTHIALACAGLKADARVLINRARVECQSHRLTVEDPVTVEYITRYIAGLQQKYTQSGGVRPFGLSTLIVGFDPYTEKPALYQTDPSGTFSAWKANATGRNSNSMREFLEKNYKDTSGKETIKLAIRALLEVVESGGKNIEIAVMTHKDGLRELEEAEIDEYVAEIEAEKAAAEAAKKGAPKET</sequence>
<reference key="1">
    <citation type="submission" date="1997-04" db="EMBL/GenBank/DDBJ databases">
        <title>Isolation and characterization of proteasome gene from rice.</title>
        <authorList>
            <person name="Lee M.C."/>
            <person name="Eun M.Y."/>
            <person name="Lee G.R."/>
        </authorList>
    </citation>
    <scope>NUCLEOTIDE SEQUENCE [MRNA]</scope>
    <source>
        <strain>cv. Milyang 23</strain>
        <tissue>Seed</tissue>
    </source>
</reference>
<reference key="2">
    <citation type="journal article" date="2005" name="PLoS Biol.">
        <title>The genomes of Oryza sativa: a history of duplications.</title>
        <authorList>
            <person name="Yu J."/>
            <person name="Wang J."/>
            <person name="Lin W."/>
            <person name="Li S."/>
            <person name="Li H."/>
            <person name="Zhou J."/>
            <person name="Ni P."/>
            <person name="Dong W."/>
            <person name="Hu S."/>
            <person name="Zeng C."/>
            <person name="Zhang J."/>
            <person name="Zhang Y."/>
            <person name="Li R."/>
            <person name="Xu Z."/>
            <person name="Li S."/>
            <person name="Li X."/>
            <person name="Zheng H."/>
            <person name="Cong L."/>
            <person name="Lin L."/>
            <person name="Yin J."/>
            <person name="Geng J."/>
            <person name="Li G."/>
            <person name="Shi J."/>
            <person name="Liu J."/>
            <person name="Lv H."/>
            <person name="Li J."/>
            <person name="Wang J."/>
            <person name="Deng Y."/>
            <person name="Ran L."/>
            <person name="Shi X."/>
            <person name="Wang X."/>
            <person name="Wu Q."/>
            <person name="Li C."/>
            <person name="Ren X."/>
            <person name="Wang J."/>
            <person name="Wang X."/>
            <person name="Li D."/>
            <person name="Liu D."/>
            <person name="Zhang X."/>
            <person name="Ji Z."/>
            <person name="Zhao W."/>
            <person name="Sun Y."/>
            <person name="Zhang Z."/>
            <person name="Bao J."/>
            <person name="Han Y."/>
            <person name="Dong L."/>
            <person name="Ji J."/>
            <person name="Chen P."/>
            <person name="Wu S."/>
            <person name="Liu J."/>
            <person name="Xiao Y."/>
            <person name="Bu D."/>
            <person name="Tan J."/>
            <person name="Yang L."/>
            <person name="Ye C."/>
            <person name="Zhang J."/>
            <person name="Xu J."/>
            <person name="Zhou Y."/>
            <person name="Yu Y."/>
            <person name="Zhang B."/>
            <person name="Zhuang S."/>
            <person name="Wei H."/>
            <person name="Liu B."/>
            <person name="Lei M."/>
            <person name="Yu H."/>
            <person name="Li Y."/>
            <person name="Xu H."/>
            <person name="Wei S."/>
            <person name="He X."/>
            <person name="Fang L."/>
            <person name="Zhang Z."/>
            <person name="Zhang Y."/>
            <person name="Huang X."/>
            <person name="Su Z."/>
            <person name="Tong W."/>
            <person name="Li J."/>
            <person name="Tong Z."/>
            <person name="Li S."/>
            <person name="Ye J."/>
            <person name="Wang L."/>
            <person name="Fang L."/>
            <person name="Lei T."/>
            <person name="Chen C.-S."/>
            <person name="Chen H.-C."/>
            <person name="Xu Z."/>
            <person name="Li H."/>
            <person name="Huang H."/>
            <person name="Zhang F."/>
            <person name="Xu H."/>
            <person name="Li N."/>
            <person name="Zhao C."/>
            <person name="Li S."/>
            <person name="Dong L."/>
            <person name="Huang Y."/>
            <person name="Li L."/>
            <person name="Xi Y."/>
            <person name="Qi Q."/>
            <person name="Li W."/>
            <person name="Zhang B."/>
            <person name="Hu W."/>
            <person name="Zhang Y."/>
            <person name="Tian X."/>
            <person name="Jiao Y."/>
            <person name="Liang X."/>
            <person name="Jin J."/>
            <person name="Gao L."/>
            <person name="Zheng W."/>
            <person name="Hao B."/>
            <person name="Liu S.-M."/>
            <person name="Wang W."/>
            <person name="Yuan L."/>
            <person name="Cao M."/>
            <person name="McDermott J."/>
            <person name="Samudrala R."/>
            <person name="Wang J."/>
            <person name="Wong G.K.-S."/>
            <person name="Yang H."/>
        </authorList>
    </citation>
    <scope>NUCLEOTIDE SEQUENCE [LARGE SCALE GENOMIC DNA]</scope>
    <source>
        <strain>cv. 93-11</strain>
    </source>
</reference>
<evidence type="ECO:0000250" key="1"/>
<evidence type="ECO:0000255" key="2">
    <source>
        <dbReference type="PROSITE-ProRule" id="PRU00808"/>
    </source>
</evidence>
<gene>
    <name type="ORF">OsI_029135</name>
</gene>
<proteinExistence type="evidence at transcript level"/>
<name>PSA7A_ORYSI</name>
<comment type="function">
    <text>The proteasome is a multicatalytic proteinase complex which is characterized by its ability to cleave peptides with Arg, Phe, Tyr, Leu, and Glu adjacent to the leaving group at neutral or slightly basic pH. The proteasome has an ATP-dependent proteolytic activity.</text>
</comment>
<comment type="subunit">
    <text>The 26S proteasome consists of a 20S proteasome core and two 19S regulatory subunits. The 20S proteasome core is composed of 28 subunits that are arranged in four stacked rings, resulting in a barrel-shaped structure. The two end rings are each formed by seven alpha subunits, and the two central rings are each formed by seven beta subunits. The catalytic chamber with the active sites is on the inside of the barrel.</text>
</comment>
<comment type="subcellular location">
    <subcellularLocation>
        <location evidence="1">Cytoplasm</location>
    </subcellularLocation>
    <subcellularLocation>
        <location evidence="1">Nucleus</location>
    </subcellularLocation>
</comment>
<comment type="similarity">
    <text evidence="2">Belongs to the peptidase T1A family.</text>
</comment>
<accession>A2YXU2</accession>
<accession>O04861</accession>
<accession>Q69JF0</accession>
<accession>Q9LRI3</accession>
<keyword id="KW-0963">Cytoplasm</keyword>
<keyword id="KW-0539">Nucleus</keyword>
<keyword id="KW-0647">Proteasome</keyword>
<keyword id="KW-1185">Reference proteome</keyword>
<organism>
    <name type="scientific">Oryza sativa subsp. indica</name>
    <name type="common">Rice</name>
    <dbReference type="NCBI Taxonomy" id="39946"/>
    <lineage>
        <taxon>Eukaryota</taxon>
        <taxon>Viridiplantae</taxon>
        <taxon>Streptophyta</taxon>
        <taxon>Embryophyta</taxon>
        <taxon>Tracheophyta</taxon>
        <taxon>Spermatophyta</taxon>
        <taxon>Magnoliopsida</taxon>
        <taxon>Liliopsida</taxon>
        <taxon>Poales</taxon>
        <taxon>Poaceae</taxon>
        <taxon>BOP clade</taxon>
        <taxon>Oryzoideae</taxon>
        <taxon>Oryzeae</taxon>
        <taxon>Oryzinae</taxon>
        <taxon>Oryza</taxon>
        <taxon>Oryza sativa</taxon>
    </lineage>
</organism>
<dbReference type="EMBL" id="U92540">
    <property type="protein sequence ID" value="AAB51521.1"/>
    <property type="molecule type" value="mRNA"/>
</dbReference>
<dbReference type="EMBL" id="CM000133">
    <property type="status" value="NOT_ANNOTATED_CDS"/>
    <property type="molecule type" value="Genomic_DNA"/>
</dbReference>
<dbReference type="PIR" id="T04300">
    <property type="entry name" value="T04300"/>
</dbReference>
<dbReference type="SMR" id="A2YXU2"/>
<dbReference type="STRING" id="39946.A2YXU2"/>
<dbReference type="EnsemblPlants" id="BGIOSGA029124-TA">
    <property type="protein sequence ID" value="BGIOSGA029124-PA"/>
    <property type="gene ID" value="BGIOSGA029124"/>
</dbReference>
<dbReference type="Gramene" id="BGIOSGA029124-TA">
    <property type="protein sequence ID" value="BGIOSGA029124-PA"/>
    <property type="gene ID" value="BGIOSGA029124"/>
</dbReference>
<dbReference type="HOGENOM" id="CLU_035750_4_0_1"/>
<dbReference type="OMA" id="ICMLDHH"/>
<dbReference type="Proteomes" id="UP000007015">
    <property type="component" value="Chromosome 8"/>
</dbReference>
<dbReference type="ExpressionAtlas" id="A2YXU2">
    <property type="expression patterns" value="differential"/>
</dbReference>
<dbReference type="GO" id="GO:0005737">
    <property type="term" value="C:cytoplasm"/>
    <property type="evidence" value="ECO:0007669"/>
    <property type="project" value="UniProtKB-SubCell"/>
</dbReference>
<dbReference type="GO" id="GO:0005634">
    <property type="term" value="C:nucleus"/>
    <property type="evidence" value="ECO:0007669"/>
    <property type="project" value="UniProtKB-SubCell"/>
</dbReference>
<dbReference type="GO" id="GO:0019773">
    <property type="term" value="C:proteasome core complex, alpha-subunit complex"/>
    <property type="evidence" value="ECO:0000250"/>
    <property type="project" value="UniProtKB"/>
</dbReference>
<dbReference type="GO" id="GO:0006511">
    <property type="term" value="P:ubiquitin-dependent protein catabolic process"/>
    <property type="evidence" value="ECO:0007669"/>
    <property type="project" value="InterPro"/>
</dbReference>
<dbReference type="CDD" id="cd03755">
    <property type="entry name" value="proteasome_alpha_type_7"/>
    <property type="match status" value="1"/>
</dbReference>
<dbReference type="FunFam" id="3.60.20.10:FF:000004">
    <property type="entry name" value="Proteasome subunit alpha type-4"/>
    <property type="match status" value="1"/>
</dbReference>
<dbReference type="Gene3D" id="3.60.20.10">
    <property type="entry name" value="Glutamine Phosphoribosylpyrophosphate, subunit 1, domain 1"/>
    <property type="match status" value="1"/>
</dbReference>
<dbReference type="InterPro" id="IPR029055">
    <property type="entry name" value="Ntn_hydrolases_N"/>
</dbReference>
<dbReference type="InterPro" id="IPR050115">
    <property type="entry name" value="Proteasome_alpha"/>
</dbReference>
<dbReference type="InterPro" id="IPR023332">
    <property type="entry name" value="Proteasome_alpha-type"/>
</dbReference>
<dbReference type="InterPro" id="IPR000426">
    <property type="entry name" value="Proteasome_asu_N"/>
</dbReference>
<dbReference type="InterPro" id="IPR001353">
    <property type="entry name" value="Proteasome_sua/b"/>
</dbReference>
<dbReference type="NCBIfam" id="NF003075">
    <property type="entry name" value="PRK03996.1"/>
    <property type="match status" value="1"/>
</dbReference>
<dbReference type="PANTHER" id="PTHR11599">
    <property type="entry name" value="PROTEASOME SUBUNIT ALPHA/BETA"/>
    <property type="match status" value="1"/>
</dbReference>
<dbReference type="Pfam" id="PF00227">
    <property type="entry name" value="Proteasome"/>
    <property type="match status" value="1"/>
</dbReference>
<dbReference type="Pfam" id="PF10584">
    <property type="entry name" value="Proteasome_A_N"/>
    <property type="match status" value="1"/>
</dbReference>
<dbReference type="SMART" id="SM00948">
    <property type="entry name" value="Proteasome_A_N"/>
    <property type="match status" value="1"/>
</dbReference>
<dbReference type="SUPFAM" id="SSF56235">
    <property type="entry name" value="N-terminal nucleophile aminohydrolases (Ntn hydrolases)"/>
    <property type="match status" value="1"/>
</dbReference>
<dbReference type="PROSITE" id="PS00388">
    <property type="entry name" value="PROTEASOME_ALPHA_1"/>
    <property type="match status" value="1"/>
</dbReference>
<dbReference type="PROSITE" id="PS51475">
    <property type="entry name" value="PROTEASOME_ALPHA_2"/>
    <property type="match status" value="1"/>
</dbReference>
<feature type="chain" id="PRO_0000301663" description="Proteasome subunit alpha type-7-A">
    <location>
        <begin position="1"/>
        <end position="249"/>
    </location>
</feature>